<dbReference type="EMBL" id="CP001097">
    <property type="protein sequence ID" value="ACD90733.1"/>
    <property type="molecule type" value="Genomic_DNA"/>
</dbReference>
<dbReference type="RefSeq" id="WP_012466606.1">
    <property type="nucleotide sequence ID" value="NC_010803.1"/>
</dbReference>
<dbReference type="SMR" id="B3EE31"/>
<dbReference type="STRING" id="290315.Clim_1691"/>
<dbReference type="KEGG" id="cli:Clim_1691"/>
<dbReference type="eggNOG" id="COG0484">
    <property type="taxonomic scope" value="Bacteria"/>
</dbReference>
<dbReference type="HOGENOM" id="CLU_017633_0_7_10"/>
<dbReference type="OrthoDB" id="9779889at2"/>
<dbReference type="Proteomes" id="UP000008841">
    <property type="component" value="Chromosome"/>
</dbReference>
<dbReference type="GO" id="GO:0005737">
    <property type="term" value="C:cytoplasm"/>
    <property type="evidence" value="ECO:0007669"/>
    <property type="project" value="UniProtKB-SubCell"/>
</dbReference>
<dbReference type="GO" id="GO:0005524">
    <property type="term" value="F:ATP binding"/>
    <property type="evidence" value="ECO:0007669"/>
    <property type="project" value="InterPro"/>
</dbReference>
<dbReference type="GO" id="GO:0031072">
    <property type="term" value="F:heat shock protein binding"/>
    <property type="evidence" value="ECO:0007669"/>
    <property type="project" value="InterPro"/>
</dbReference>
<dbReference type="GO" id="GO:0051082">
    <property type="term" value="F:unfolded protein binding"/>
    <property type="evidence" value="ECO:0007669"/>
    <property type="project" value="UniProtKB-UniRule"/>
</dbReference>
<dbReference type="GO" id="GO:0008270">
    <property type="term" value="F:zinc ion binding"/>
    <property type="evidence" value="ECO:0007669"/>
    <property type="project" value="UniProtKB-UniRule"/>
</dbReference>
<dbReference type="GO" id="GO:0051085">
    <property type="term" value="P:chaperone cofactor-dependent protein refolding"/>
    <property type="evidence" value="ECO:0007669"/>
    <property type="project" value="TreeGrafter"/>
</dbReference>
<dbReference type="GO" id="GO:0006260">
    <property type="term" value="P:DNA replication"/>
    <property type="evidence" value="ECO:0007669"/>
    <property type="project" value="UniProtKB-KW"/>
</dbReference>
<dbReference type="GO" id="GO:0042026">
    <property type="term" value="P:protein refolding"/>
    <property type="evidence" value="ECO:0007669"/>
    <property type="project" value="TreeGrafter"/>
</dbReference>
<dbReference type="GO" id="GO:0009408">
    <property type="term" value="P:response to heat"/>
    <property type="evidence" value="ECO:0007669"/>
    <property type="project" value="InterPro"/>
</dbReference>
<dbReference type="CDD" id="cd06257">
    <property type="entry name" value="DnaJ"/>
    <property type="match status" value="1"/>
</dbReference>
<dbReference type="CDD" id="cd10747">
    <property type="entry name" value="DnaJ_C"/>
    <property type="match status" value="1"/>
</dbReference>
<dbReference type="CDD" id="cd10719">
    <property type="entry name" value="DnaJ_zf"/>
    <property type="match status" value="1"/>
</dbReference>
<dbReference type="FunFam" id="1.10.287.110:FF:000034">
    <property type="entry name" value="Chaperone protein DnaJ"/>
    <property type="match status" value="1"/>
</dbReference>
<dbReference type="FunFam" id="2.60.260.20:FF:000005">
    <property type="entry name" value="Chaperone protein dnaJ 1, mitochondrial"/>
    <property type="match status" value="1"/>
</dbReference>
<dbReference type="FunFam" id="2.10.230.10:FF:000002">
    <property type="entry name" value="Molecular chaperone DnaJ"/>
    <property type="match status" value="1"/>
</dbReference>
<dbReference type="Gene3D" id="1.10.287.110">
    <property type="entry name" value="DnaJ domain"/>
    <property type="match status" value="1"/>
</dbReference>
<dbReference type="Gene3D" id="2.10.230.10">
    <property type="entry name" value="Heat shock protein DnaJ, cysteine-rich domain"/>
    <property type="match status" value="1"/>
</dbReference>
<dbReference type="Gene3D" id="2.60.260.20">
    <property type="entry name" value="Urease metallochaperone UreE, N-terminal domain"/>
    <property type="match status" value="2"/>
</dbReference>
<dbReference type="HAMAP" id="MF_01152">
    <property type="entry name" value="DnaJ"/>
    <property type="match status" value="1"/>
</dbReference>
<dbReference type="InterPro" id="IPR012724">
    <property type="entry name" value="DnaJ"/>
</dbReference>
<dbReference type="InterPro" id="IPR002939">
    <property type="entry name" value="DnaJ_C"/>
</dbReference>
<dbReference type="InterPro" id="IPR001623">
    <property type="entry name" value="DnaJ_domain"/>
</dbReference>
<dbReference type="InterPro" id="IPR018253">
    <property type="entry name" value="DnaJ_domain_CS"/>
</dbReference>
<dbReference type="InterPro" id="IPR008971">
    <property type="entry name" value="HSP40/DnaJ_pept-bd"/>
</dbReference>
<dbReference type="InterPro" id="IPR001305">
    <property type="entry name" value="HSP_DnaJ_Cys-rich_dom"/>
</dbReference>
<dbReference type="InterPro" id="IPR036410">
    <property type="entry name" value="HSP_DnaJ_Cys-rich_dom_sf"/>
</dbReference>
<dbReference type="InterPro" id="IPR036869">
    <property type="entry name" value="J_dom_sf"/>
</dbReference>
<dbReference type="NCBIfam" id="TIGR02349">
    <property type="entry name" value="DnaJ_bact"/>
    <property type="match status" value="1"/>
</dbReference>
<dbReference type="NCBIfam" id="NF008035">
    <property type="entry name" value="PRK10767.1"/>
    <property type="match status" value="1"/>
</dbReference>
<dbReference type="NCBIfam" id="NF010874">
    <property type="entry name" value="PRK14281.1"/>
    <property type="match status" value="1"/>
</dbReference>
<dbReference type="PANTHER" id="PTHR43096:SF48">
    <property type="entry name" value="CHAPERONE PROTEIN DNAJ"/>
    <property type="match status" value="1"/>
</dbReference>
<dbReference type="PANTHER" id="PTHR43096">
    <property type="entry name" value="DNAJ HOMOLOG 1, MITOCHONDRIAL-RELATED"/>
    <property type="match status" value="1"/>
</dbReference>
<dbReference type="Pfam" id="PF00226">
    <property type="entry name" value="DnaJ"/>
    <property type="match status" value="1"/>
</dbReference>
<dbReference type="Pfam" id="PF01556">
    <property type="entry name" value="DnaJ_C"/>
    <property type="match status" value="1"/>
</dbReference>
<dbReference type="Pfam" id="PF00684">
    <property type="entry name" value="DnaJ_CXXCXGXG"/>
    <property type="match status" value="1"/>
</dbReference>
<dbReference type="PRINTS" id="PR00625">
    <property type="entry name" value="JDOMAIN"/>
</dbReference>
<dbReference type="SMART" id="SM00271">
    <property type="entry name" value="DnaJ"/>
    <property type="match status" value="1"/>
</dbReference>
<dbReference type="SUPFAM" id="SSF46565">
    <property type="entry name" value="Chaperone J-domain"/>
    <property type="match status" value="1"/>
</dbReference>
<dbReference type="SUPFAM" id="SSF57938">
    <property type="entry name" value="DnaJ/Hsp40 cysteine-rich domain"/>
    <property type="match status" value="1"/>
</dbReference>
<dbReference type="SUPFAM" id="SSF49493">
    <property type="entry name" value="HSP40/DnaJ peptide-binding domain"/>
    <property type="match status" value="2"/>
</dbReference>
<dbReference type="PROSITE" id="PS00636">
    <property type="entry name" value="DNAJ_1"/>
    <property type="match status" value="1"/>
</dbReference>
<dbReference type="PROSITE" id="PS50076">
    <property type="entry name" value="DNAJ_2"/>
    <property type="match status" value="1"/>
</dbReference>
<dbReference type="PROSITE" id="PS51188">
    <property type="entry name" value="ZF_CR"/>
    <property type="match status" value="1"/>
</dbReference>
<feature type="chain" id="PRO_1000137669" description="Chaperone protein DnaJ">
    <location>
        <begin position="1"/>
        <end position="401"/>
    </location>
</feature>
<feature type="domain" description="J" evidence="1">
    <location>
        <begin position="4"/>
        <end position="69"/>
    </location>
</feature>
<feature type="repeat" description="CXXCXGXG motif">
    <location>
        <begin position="169"/>
        <end position="176"/>
    </location>
</feature>
<feature type="repeat" description="CXXCXGXG motif">
    <location>
        <begin position="185"/>
        <end position="192"/>
    </location>
</feature>
<feature type="repeat" description="CXXCXGXG motif">
    <location>
        <begin position="211"/>
        <end position="218"/>
    </location>
</feature>
<feature type="repeat" description="CXXCXGXG motif">
    <location>
        <begin position="225"/>
        <end position="232"/>
    </location>
</feature>
<feature type="zinc finger region" description="CR-type" evidence="1">
    <location>
        <begin position="156"/>
        <end position="237"/>
    </location>
</feature>
<feature type="region of interest" description="Disordered" evidence="2">
    <location>
        <begin position="377"/>
        <end position="401"/>
    </location>
</feature>
<feature type="compositionally biased region" description="Basic and acidic residues" evidence="2">
    <location>
        <begin position="385"/>
        <end position="401"/>
    </location>
</feature>
<feature type="binding site" evidence="1">
    <location>
        <position position="169"/>
    </location>
    <ligand>
        <name>Zn(2+)</name>
        <dbReference type="ChEBI" id="CHEBI:29105"/>
        <label>1</label>
    </ligand>
</feature>
<feature type="binding site" evidence="1">
    <location>
        <position position="172"/>
    </location>
    <ligand>
        <name>Zn(2+)</name>
        <dbReference type="ChEBI" id="CHEBI:29105"/>
        <label>1</label>
    </ligand>
</feature>
<feature type="binding site" evidence="1">
    <location>
        <position position="185"/>
    </location>
    <ligand>
        <name>Zn(2+)</name>
        <dbReference type="ChEBI" id="CHEBI:29105"/>
        <label>2</label>
    </ligand>
</feature>
<feature type="binding site" evidence="1">
    <location>
        <position position="188"/>
    </location>
    <ligand>
        <name>Zn(2+)</name>
        <dbReference type="ChEBI" id="CHEBI:29105"/>
        <label>2</label>
    </ligand>
</feature>
<feature type="binding site" evidence="1">
    <location>
        <position position="211"/>
    </location>
    <ligand>
        <name>Zn(2+)</name>
        <dbReference type="ChEBI" id="CHEBI:29105"/>
        <label>2</label>
    </ligand>
</feature>
<feature type="binding site" evidence="1">
    <location>
        <position position="214"/>
    </location>
    <ligand>
        <name>Zn(2+)</name>
        <dbReference type="ChEBI" id="CHEBI:29105"/>
        <label>2</label>
    </ligand>
</feature>
<feature type="binding site" evidence="1">
    <location>
        <position position="225"/>
    </location>
    <ligand>
        <name>Zn(2+)</name>
        <dbReference type="ChEBI" id="CHEBI:29105"/>
        <label>1</label>
    </ligand>
</feature>
<feature type="binding site" evidence="1">
    <location>
        <position position="228"/>
    </location>
    <ligand>
        <name>Zn(2+)</name>
        <dbReference type="ChEBI" id="CHEBI:29105"/>
        <label>1</label>
    </ligand>
</feature>
<reference key="1">
    <citation type="submission" date="2008-05" db="EMBL/GenBank/DDBJ databases">
        <title>Complete sequence of Chlorobium limicola DSM 245.</title>
        <authorList>
            <consortium name="US DOE Joint Genome Institute"/>
            <person name="Lucas S."/>
            <person name="Copeland A."/>
            <person name="Lapidus A."/>
            <person name="Glavina del Rio T."/>
            <person name="Dalin E."/>
            <person name="Tice H."/>
            <person name="Bruce D."/>
            <person name="Goodwin L."/>
            <person name="Pitluck S."/>
            <person name="Schmutz J."/>
            <person name="Larimer F."/>
            <person name="Land M."/>
            <person name="Hauser L."/>
            <person name="Kyrpides N."/>
            <person name="Ovchinnikova G."/>
            <person name="Zhao F."/>
            <person name="Li T."/>
            <person name="Liu Z."/>
            <person name="Overmann J."/>
            <person name="Bryant D.A."/>
            <person name="Richardson P."/>
        </authorList>
    </citation>
    <scope>NUCLEOTIDE SEQUENCE [LARGE SCALE GENOMIC DNA]</scope>
    <source>
        <strain>DSM 245 / NBRC 103803 / 6330</strain>
    </source>
</reference>
<comment type="function">
    <text evidence="1">Participates actively in the response to hyperosmotic and heat shock by preventing the aggregation of stress-denatured proteins and by disaggregating proteins, also in an autonomous, DnaK-independent fashion. Unfolded proteins bind initially to DnaJ; upon interaction with the DnaJ-bound protein, DnaK hydrolyzes its bound ATP, resulting in the formation of a stable complex. GrpE releases ADP from DnaK; ATP binding to DnaK triggers the release of the substrate protein, thus completing the reaction cycle. Several rounds of ATP-dependent interactions between DnaJ, DnaK and GrpE are required for fully efficient folding. Also involved, together with DnaK and GrpE, in the DNA replication of plasmids through activation of initiation proteins.</text>
</comment>
<comment type="cofactor">
    <cofactor evidence="1">
        <name>Zn(2+)</name>
        <dbReference type="ChEBI" id="CHEBI:29105"/>
    </cofactor>
    <text evidence="1">Binds 2 Zn(2+) ions per monomer.</text>
</comment>
<comment type="subunit">
    <text evidence="1">Homodimer.</text>
</comment>
<comment type="subcellular location">
    <subcellularLocation>
        <location evidence="1">Cytoplasm</location>
    </subcellularLocation>
</comment>
<comment type="domain">
    <text evidence="1">The J domain is necessary and sufficient to stimulate DnaK ATPase activity. Zinc center 1 plays an important role in the autonomous, DnaK-independent chaperone activity of DnaJ. Zinc center 2 is essential for interaction with DnaK and for DnaJ activity.</text>
</comment>
<comment type="similarity">
    <text evidence="1">Belongs to the DnaJ family.</text>
</comment>
<name>DNAJ_CHLL2</name>
<sequence>MKKDYYEVLGVSRSASKDEIKKAYRKLALQYHPDKNPDNKDAEEHFKEVNEAYEVLSNDDKRRRYDQFGHAGVGSSAASGAGGAYAGGATDFNDIFSAFNDMFGGGRARGGGAPFGFEEVFGGGGGAGRRGRTSAGISGTDLKIRLKLTLEEIAKGVEKTLKIKKQIVCKECNGSGSKTGATEPCQTCHGSGEVRQASKTMFGQFVNITACPTCGGEGRVVKDRCTACYGEGIKQGDVTVKVTVPAGVQDGNYLTLRGQGNAGPRGGAPGDLIVVIEEKPHELFRRDGNDVIFNLALSYPDLVLGTKIDVPTLDGAVKLTIPPATQPESMLRIPGQGIGHLRGSGKGDQLVRVNVYVPKDLSHHEKELLKELKKTAAFSPSGSNNDKEEKSFFEKARDIFS</sequence>
<organism>
    <name type="scientific">Chlorobium limicola (strain DSM 245 / NBRC 103803 / 6330)</name>
    <dbReference type="NCBI Taxonomy" id="290315"/>
    <lineage>
        <taxon>Bacteria</taxon>
        <taxon>Pseudomonadati</taxon>
        <taxon>Chlorobiota</taxon>
        <taxon>Chlorobiia</taxon>
        <taxon>Chlorobiales</taxon>
        <taxon>Chlorobiaceae</taxon>
        <taxon>Chlorobium/Pelodictyon group</taxon>
        <taxon>Chlorobium</taxon>
    </lineage>
</organism>
<proteinExistence type="inferred from homology"/>
<evidence type="ECO:0000255" key="1">
    <source>
        <dbReference type="HAMAP-Rule" id="MF_01152"/>
    </source>
</evidence>
<evidence type="ECO:0000256" key="2">
    <source>
        <dbReference type="SAM" id="MobiDB-lite"/>
    </source>
</evidence>
<accession>B3EE31</accession>
<protein>
    <recommendedName>
        <fullName evidence="1">Chaperone protein DnaJ</fullName>
    </recommendedName>
</protein>
<keyword id="KW-0143">Chaperone</keyword>
<keyword id="KW-0963">Cytoplasm</keyword>
<keyword id="KW-0235">DNA replication</keyword>
<keyword id="KW-0479">Metal-binding</keyword>
<keyword id="KW-0677">Repeat</keyword>
<keyword id="KW-0346">Stress response</keyword>
<keyword id="KW-0862">Zinc</keyword>
<keyword id="KW-0863">Zinc-finger</keyword>
<gene>
    <name evidence="1" type="primary">dnaJ</name>
    <name type="ordered locus">Clim_1691</name>
</gene>